<dbReference type="EMBL" id="GU292993">
    <property type="protein sequence ID" value="ADB56809.1"/>
    <property type="molecule type" value="mRNA"/>
</dbReference>
<dbReference type="EMBL" id="GU293127">
    <property type="protein sequence ID" value="ADB56943.1"/>
    <property type="molecule type" value="Genomic_DNA"/>
</dbReference>
<dbReference type="SMR" id="D2Y2B6"/>
<dbReference type="ArachnoServer" id="AS001729">
    <property type="toxin name" value="U10-theraphotoxin-Hhn1a"/>
</dbReference>
<dbReference type="GO" id="GO:0005576">
    <property type="term" value="C:extracellular region"/>
    <property type="evidence" value="ECO:0007669"/>
    <property type="project" value="UniProtKB-SubCell"/>
</dbReference>
<dbReference type="GO" id="GO:0099106">
    <property type="term" value="F:ion channel regulator activity"/>
    <property type="evidence" value="ECO:0007669"/>
    <property type="project" value="UniProtKB-KW"/>
</dbReference>
<dbReference type="GO" id="GO:0090729">
    <property type="term" value="F:toxin activity"/>
    <property type="evidence" value="ECO:0007669"/>
    <property type="project" value="UniProtKB-KW"/>
</dbReference>
<sequence length="117" mass="13047">MKLCAVIIASLLVCVAVASSSDNQKEFAQEKEMTREETQSLGEHEKDDEVTGSEERSCIEEWKTCENDCECCGMSTLCAASWVDGHQIKLCRNEGGKLKKVLHFIQKSVSKIKSCKK</sequence>
<evidence type="ECO:0000250" key="1"/>
<evidence type="ECO:0000255" key="2"/>
<evidence type="ECO:0000256" key="3">
    <source>
        <dbReference type="SAM" id="MobiDB-lite"/>
    </source>
</evidence>
<evidence type="ECO:0000305" key="4"/>
<organism>
    <name type="scientific">Cyriopagopus hainanus</name>
    <name type="common">Chinese bird spider</name>
    <name type="synonym">Haplopelma hainanum</name>
    <dbReference type="NCBI Taxonomy" id="209901"/>
    <lineage>
        <taxon>Eukaryota</taxon>
        <taxon>Metazoa</taxon>
        <taxon>Ecdysozoa</taxon>
        <taxon>Arthropoda</taxon>
        <taxon>Chelicerata</taxon>
        <taxon>Arachnida</taxon>
        <taxon>Araneae</taxon>
        <taxon>Mygalomorphae</taxon>
        <taxon>Theraphosidae</taxon>
        <taxon>Haplopelma</taxon>
    </lineage>
</organism>
<name>TX32A_CYRHA</name>
<protein>
    <recommendedName>
        <fullName>Hainantoxin-XV</fullName>
        <shortName>HNTX-XV</shortName>
    </recommendedName>
</protein>
<keyword id="KW-1015">Disulfide bond</keyword>
<keyword id="KW-0872">Ion channel impairing toxin</keyword>
<keyword id="KW-0960">Knottin</keyword>
<keyword id="KW-0964">Secreted</keyword>
<keyword id="KW-0732">Signal</keyword>
<keyword id="KW-0800">Toxin</keyword>
<accession>D2Y2B6</accession>
<reference key="1">
    <citation type="journal article" date="2010" name="J. Proteome Res.">
        <title>Molecular diversification of peptide toxins from the tarantula Haplopelma hainanum (Ornithoctonus hainana) venom based on transcriptomic, peptidomic, and genomic analyses.</title>
        <authorList>
            <person name="Tang X."/>
            <person name="Zhang Y."/>
            <person name="Hu W."/>
            <person name="Xu D."/>
            <person name="Tao H."/>
            <person name="Yang X."/>
            <person name="Li Y."/>
            <person name="Jiang L."/>
            <person name="Liang S."/>
        </authorList>
    </citation>
    <scope>NUCLEOTIDE SEQUENCE [LARGE SCALE GENOMIC DNA / MRNA]</scope>
    <source>
        <tissue>Venom gland</tissue>
    </source>
</reference>
<feature type="signal peptide" evidence="2">
    <location>
        <begin position="1"/>
        <end position="20"/>
    </location>
</feature>
<feature type="propeptide" id="PRO_0000401015" evidence="1">
    <location>
        <begin position="21"/>
        <end position="56"/>
    </location>
</feature>
<feature type="peptide" id="PRO_0000401016" description="Hainantoxin-XV">
    <location>
        <begin position="57"/>
        <end position="117"/>
    </location>
</feature>
<feature type="region of interest" description="Disordered" evidence="3">
    <location>
        <begin position="20"/>
        <end position="55"/>
    </location>
</feature>
<feature type="compositionally biased region" description="Basic and acidic residues" evidence="3">
    <location>
        <begin position="23"/>
        <end position="55"/>
    </location>
</feature>
<feature type="disulfide bond" evidence="4">
    <location>
        <begin position="58"/>
        <end position="72"/>
    </location>
</feature>
<feature type="disulfide bond" evidence="4">
    <location>
        <begin position="65"/>
        <end position="78"/>
    </location>
</feature>
<feature type="disulfide bond" evidence="4">
    <location>
        <begin position="69"/>
        <end position="115"/>
    </location>
</feature>
<feature type="disulfide bond" evidence="4">
    <location>
        <begin position="71"/>
        <end position="91"/>
    </location>
</feature>
<proteinExistence type="evidence at transcript level"/>
<comment type="function">
    <text>Putative ion channel inhibitor.</text>
</comment>
<comment type="subcellular location">
    <subcellularLocation>
        <location evidence="1">Secreted</location>
    </subcellularLocation>
</comment>
<comment type="tissue specificity">
    <text>Expressed by the venom gland.</text>
</comment>
<comment type="domain">
    <text evidence="4">The presence of a 'disulfide through disulfide knot' structurally defines this protein as a knottin.</text>
</comment>
<comment type="similarity">
    <text>Belongs to the neurotoxin 03 (Tx2) family. 02 subfamily. HNTX-XV sub-subfamily.</text>
</comment>